<keyword id="KW-0217">Developmental protein</keyword>
<keyword id="KW-0221">Differentiation</keyword>
<keyword id="KW-1015">Disulfide bond</keyword>
<keyword id="KW-0325">Glycoprotein</keyword>
<keyword id="KW-1185">Reference proteome</keyword>
<keyword id="KW-0964">Secreted</keyword>
<keyword id="KW-0732">Signal</keyword>
<keyword id="KW-0879">Wnt signaling pathway</keyword>
<name>SFRP1_MOUSE</name>
<evidence type="ECO:0000250" key="1"/>
<evidence type="ECO:0000255" key="2"/>
<evidence type="ECO:0000255" key="3">
    <source>
        <dbReference type="PROSITE-ProRule" id="PRU00090"/>
    </source>
</evidence>
<evidence type="ECO:0000255" key="4">
    <source>
        <dbReference type="PROSITE-ProRule" id="PRU00295"/>
    </source>
</evidence>
<evidence type="ECO:0000269" key="5">
    <source>
    </source>
</evidence>
<evidence type="ECO:0000269" key="6">
    <source>
    </source>
</evidence>
<evidence type="ECO:0000269" key="7">
    <source>
    </source>
</evidence>
<evidence type="ECO:0000269" key="8">
    <source>
    </source>
</evidence>
<evidence type="ECO:0000269" key="9">
    <source>
    </source>
</evidence>
<evidence type="ECO:0000269" key="10">
    <source>
    </source>
</evidence>
<evidence type="ECO:0000305" key="11"/>
<evidence type="ECO:0000312" key="12">
    <source>
        <dbReference type="MGI" id="MGI:892014"/>
    </source>
</evidence>
<comment type="function">
    <text evidence="1 6">Soluble frizzled-related proteins (sFRPS) function as modulators of Wnt signaling through direct interaction with Wnts. They have a role in regulating cell growth and differentiation in specific cell types. SFRP1 decreases intracellular beta-catenin levels (By similarity). Has antiproliferative effects on vascular cells, in vitro and in vivo, and can induce, in vivo, an angiogenic response. In vascular cell cycle, delays the G1 phase and entry into the S phase. In kidney development, inhibits tubule formation and bud growth in metanephroi (By similarity). Inhibits WNT1/WNT4-mediated TCF-dependent transcription (By similarity).</text>
</comment>
<comment type="subunit">
    <text evidence="1 5 7">Interacts with WNT8, WNT1, WNT2, WNT4 and FRZD6 (By similarity). Interacts with MYOC.</text>
</comment>
<comment type="subcellular location">
    <subcellularLocation>
        <location evidence="1">Secreted</location>
    </subcellularLocation>
    <text evidence="1">Cell membrane or extracellular matrix-associated. Released by heparin-binding (By similarity).</text>
</comment>
<comment type="tissue specificity">
    <text evidence="9">Highly expressed in kidney and embryonic heart. Also highly expressed in the eye, where it is principally localized to the ciliary body and the lens epithelium. Weaker expression in heart, lung and brain. In the brain, is expressed exclusively in the choroid plexus.</text>
</comment>
<comment type="developmental stage">
    <text evidence="5 8 10">In the developing kidney expressed at 13.5 dpc in the periphery of the metanophros and surrounding the uretic and nephrogenic tubules. At 14.5 dpc, expression decreases in the outer cortical cells and becomes visible in the tubular parts of the nephron. From 15.5 dpc, highly expressed in the future loops of Henle. In the developing CNS, expression located to the forebrain and hindbrain. At 8.0 dpc, expressed in the future forebrain and in the ventral portion of the presumptive hindbrain. At 8.5 dpc, expression is maintained in these tissues with a strong signal in rhombomere 4. Until 11.5 dpc, expression continues in the hindbrain with additional expression at 9.5 dpc and 10.5 dpc, in the nasal and epibranchial placodes. In the forebrain, initial expression is found in the proencephalon of the forebrain, and then strong expression in the telencephalic vesicle up to 15.5 dpc. Expression is then found in specific cell populations throughout the brain. In the developing eye, expression, by 10.5 dpc, is confined to ectodermal cells overlying the dorsal part of the optic cup. In later stages, expression limited to the lens fiber cells and the future pigmented retina. By 15.5 dpc, expression is confined to the anterior part of the lens. During limb development, barely expressed until later stages, when it is found in the distal part of the separating phalanges. In other developing structures, expressed in nasal placodes at 9.5 dpc, in medial nasal processes at 10.5 dpc and then in the anterior portion of the invaginating olfactory epithelium. At 15.5 dpc, expressed on the basal side of the nasal epithelium. Expressed in the mandibular molar tooth mesenchyme at 13.5 dpc (PubMed:27713059). Expressed in developing teeth, with the highest levels at 15.5 dpc and 16.5 dpc in the mesenchyme and the dental epithelium of the developing molars. As well, expressed in the ventral body wall, in the mesenchyme derived adrenal cortex, the cochlear epithelium and the branching epithelium of the salivary gland. In the developing heart, weakly expressed from 8.5 dpc in the tubular heart endocardium and myocardium. From 8.5 dpc to 12.5 dpc expressed in cardiomyocytes. At 9.5 dpc, expression found in the common ventricular and atrial chamber of the developing heart, in the aortic sac and in the sinus venosus. High expression found from 11.5 dpc-12.5 dpc, in the trabeculated wall of the ventricular chamber together with the wall of the atrial chamber. Expression also found in the muscular part of the interventricular septum. From 9.5 dpc-11.5 dpc expression in the visceral yolk sac confined to the inner lining endothelial cell layer. Expression in the developing heart decreases after 14.5 dpc.</text>
</comment>
<comment type="domain">
    <text evidence="1">The FZ domain is involved in binding with Wnt ligands.</text>
</comment>
<comment type="similarity">
    <text evidence="11">Belongs to the secreted frizzled-related protein (sFRP) family.</text>
</comment>
<gene>
    <name evidence="12" type="primary">Sfrp1</name>
</gene>
<reference key="1">
    <citation type="journal article" date="1997" name="Proc. Natl. Acad. Sci. U.S.A.">
        <title>A family of secreted proteins contains homology to the cysteine-rich ligand-binding domain of frizzled receptors.</title>
        <authorList>
            <person name="Rattner A."/>
            <person name="Hsieh J.-C."/>
            <person name="Smallwood P.M."/>
            <person name="Gilbert D.J."/>
            <person name="Copeland N.G."/>
            <person name="Jenkins N.A."/>
            <person name="Nathans J."/>
        </authorList>
    </citation>
    <scope>NUCLEOTIDE SEQUENCE [MRNA]</scope>
    <scope>TISSUE SPECIFICITY</scope>
    <source>
        <strain>C57BL/6J</strain>
        <tissue>Embryonic eye</tissue>
    </source>
</reference>
<reference key="2">
    <citation type="journal article" date="2004" name="Genome Res.">
        <title>The status, quality, and expansion of the NIH full-length cDNA project: the Mammalian Gene Collection (MGC).</title>
        <authorList>
            <consortium name="The MGC Project Team"/>
        </authorList>
    </citation>
    <scope>NUCLEOTIDE SEQUENCE [LARGE SCALE MRNA]</scope>
    <source>
        <strain>C57BL/6J</strain>
        <strain>FVB/N</strain>
        <tissue>Brain</tissue>
        <tissue>Colon</tissue>
    </source>
</reference>
<reference key="3">
    <citation type="journal article" date="2005" name="Science">
        <title>The transcriptional landscape of the mammalian genome.</title>
        <authorList>
            <person name="Carninci P."/>
            <person name="Kasukawa T."/>
            <person name="Katayama S."/>
            <person name="Gough J."/>
            <person name="Frith M.C."/>
            <person name="Maeda N."/>
            <person name="Oyama R."/>
            <person name="Ravasi T."/>
            <person name="Lenhard B."/>
            <person name="Wells C."/>
            <person name="Kodzius R."/>
            <person name="Shimokawa K."/>
            <person name="Bajic V.B."/>
            <person name="Brenner S.E."/>
            <person name="Batalov S."/>
            <person name="Forrest A.R."/>
            <person name="Zavolan M."/>
            <person name="Davis M.J."/>
            <person name="Wilming L.G."/>
            <person name="Aidinis V."/>
            <person name="Allen J.E."/>
            <person name="Ambesi-Impiombato A."/>
            <person name="Apweiler R."/>
            <person name="Aturaliya R.N."/>
            <person name="Bailey T.L."/>
            <person name="Bansal M."/>
            <person name="Baxter L."/>
            <person name="Beisel K.W."/>
            <person name="Bersano T."/>
            <person name="Bono H."/>
            <person name="Chalk A.M."/>
            <person name="Chiu K.P."/>
            <person name="Choudhary V."/>
            <person name="Christoffels A."/>
            <person name="Clutterbuck D.R."/>
            <person name="Crowe M.L."/>
            <person name="Dalla E."/>
            <person name="Dalrymple B.P."/>
            <person name="de Bono B."/>
            <person name="Della Gatta G."/>
            <person name="di Bernardo D."/>
            <person name="Down T."/>
            <person name="Engstrom P."/>
            <person name="Fagiolini M."/>
            <person name="Faulkner G."/>
            <person name="Fletcher C.F."/>
            <person name="Fukushima T."/>
            <person name="Furuno M."/>
            <person name="Futaki S."/>
            <person name="Gariboldi M."/>
            <person name="Georgii-Hemming P."/>
            <person name="Gingeras T.R."/>
            <person name="Gojobori T."/>
            <person name="Green R.E."/>
            <person name="Gustincich S."/>
            <person name="Harbers M."/>
            <person name="Hayashi Y."/>
            <person name="Hensch T.K."/>
            <person name="Hirokawa N."/>
            <person name="Hill D."/>
            <person name="Huminiecki L."/>
            <person name="Iacono M."/>
            <person name="Ikeo K."/>
            <person name="Iwama A."/>
            <person name="Ishikawa T."/>
            <person name="Jakt M."/>
            <person name="Kanapin A."/>
            <person name="Katoh M."/>
            <person name="Kawasawa Y."/>
            <person name="Kelso J."/>
            <person name="Kitamura H."/>
            <person name="Kitano H."/>
            <person name="Kollias G."/>
            <person name="Krishnan S.P."/>
            <person name="Kruger A."/>
            <person name="Kummerfeld S.K."/>
            <person name="Kurochkin I.V."/>
            <person name="Lareau L.F."/>
            <person name="Lazarevic D."/>
            <person name="Lipovich L."/>
            <person name="Liu J."/>
            <person name="Liuni S."/>
            <person name="McWilliam S."/>
            <person name="Madan Babu M."/>
            <person name="Madera M."/>
            <person name="Marchionni L."/>
            <person name="Matsuda H."/>
            <person name="Matsuzawa S."/>
            <person name="Miki H."/>
            <person name="Mignone F."/>
            <person name="Miyake S."/>
            <person name="Morris K."/>
            <person name="Mottagui-Tabar S."/>
            <person name="Mulder N."/>
            <person name="Nakano N."/>
            <person name="Nakauchi H."/>
            <person name="Ng P."/>
            <person name="Nilsson R."/>
            <person name="Nishiguchi S."/>
            <person name="Nishikawa S."/>
            <person name="Nori F."/>
            <person name="Ohara O."/>
            <person name="Okazaki Y."/>
            <person name="Orlando V."/>
            <person name="Pang K.C."/>
            <person name="Pavan W.J."/>
            <person name="Pavesi G."/>
            <person name="Pesole G."/>
            <person name="Petrovsky N."/>
            <person name="Piazza S."/>
            <person name="Reed J."/>
            <person name="Reid J.F."/>
            <person name="Ring B.Z."/>
            <person name="Ringwald M."/>
            <person name="Rost B."/>
            <person name="Ruan Y."/>
            <person name="Salzberg S.L."/>
            <person name="Sandelin A."/>
            <person name="Schneider C."/>
            <person name="Schoenbach C."/>
            <person name="Sekiguchi K."/>
            <person name="Semple C.A."/>
            <person name="Seno S."/>
            <person name="Sessa L."/>
            <person name="Sheng Y."/>
            <person name="Shibata Y."/>
            <person name="Shimada H."/>
            <person name="Shimada K."/>
            <person name="Silva D."/>
            <person name="Sinclair B."/>
            <person name="Sperling S."/>
            <person name="Stupka E."/>
            <person name="Sugiura K."/>
            <person name="Sultana R."/>
            <person name="Takenaka Y."/>
            <person name="Taki K."/>
            <person name="Tammoja K."/>
            <person name="Tan S.L."/>
            <person name="Tang S."/>
            <person name="Taylor M.S."/>
            <person name="Tegner J."/>
            <person name="Teichmann S.A."/>
            <person name="Ueda H.R."/>
            <person name="van Nimwegen E."/>
            <person name="Verardo R."/>
            <person name="Wei C.L."/>
            <person name="Yagi K."/>
            <person name="Yamanishi H."/>
            <person name="Zabarovsky E."/>
            <person name="Zhu S."/>
            <person name="Zimmer A."/>
            <person name="Hide W."/>
            <person name="Bult C."/>
            <person name="Grimmond S.M."/>
            <person name="Teasdale R.D."/>
            <person name="Liu E.T."/>
            <person name="Brusic V."/>
            <person name="Quackenbush J."/>
            <person name="Wahlestedt C."/>
            <person name="Mattick J.S."/>
            <person name="Hume D.A."/>
            <person name="Kai C."/>
            <person name="Sasaki D."/>
            <person name="Tomaru Y."/>
            <person name="Fukuda S."/>
            <person name="Kanamori-Katayama M."/>
            <person name="Suzuki M."/>
            <person name="Aoki J."/>
            <person name="Arakawa T."/>
            <person name="Iida J."/>
            <person name="Imamura K."/>
            <person name="Itoh M."/>
            <person name="Kato T."/>
            <person name="Kawaji H."/>
            <person name="Kawagashira N."/>
            <person name="Kawashima T."/>
            <person name="Kojima M."/>
            <person name="Kondo S."/>
            <person name="Konno H."/>
            <person name="Nakano K."/>
            <person name="Ninomiya N."/>
            <person name="Nishio T."/>
            <person name="Okada M."/>
            <person name="Plessy C."/>
            <person name="Shibata K."/>
            <person name="Shiraki T."/>
            <person name="Suzuki S."/>
            <person name="Tagami M."/>
            <person name="Waki K."/>
            <person name="Watahiki A."/>
            <person name="Okamura-Oho Y."/>
            <person name="Suzuki H."/>
            <person name="Kawai J."/>
            <person name="Hayashizaki Y."/>
        </authorList>
    </citation>
    <scope>NUCLEOTIDE SEQUENCE [LARGE SCALE MRNA] OF 43-314</scope>
    <source>
        <strain>C57BL/6J</strain>
        <tissue>Cerebellum</tissue>
    </source>
</reference>
<reference key="4">
    <citation type="journal article" date="1998" name="Mech. Dev.">
        <title>Developmental expression patterns of mouse sFRP genes encoding members of the secreted frizzled related protein family.</title>
        <authorList>
            <person name="Leimeister C."/>
            <person name="Bach A."/>
            <person name="Gessler M."/>
        </authorList>
    </citation>
    <scope>DEVELOPMENTAL STAGE</scope>
</reference>
<reference key="5">
    <citation type="journal article" date="2000" name="Mech. Dev.">
        <title>Expression pattern of mouse sFRP-1 and mWnt-8 gene during heart morphogenesis.</title>
        <authorList>
            <person name="Jaspard B."/>
            <person name="Couffinhal T."/>
            <person name="Dufourcq P."/>
            <person name="Moreau C."/>
            <person name="Duplaa C."/>
        </authorList>
    </citation>
    <scope>INTERACTION WITH WNT8</scope>
    <scope>DEVELOPMENTAL STAGE</scope>
</reference>
<reference key="6">
    <citation type="journal article" date="2004" name="Cardiovasc. Res.">
        <title>FrzA/sFRP-1, a secreted antagonist of the Wnt-Frizzled pathway, controls vascular cell proliferation in vitro and in vivo.</title>
        <authorList>
            <person name="Ezan J."/>
            <person name="Leroux L."/>
            <person name="Barandon L."/>
            <person name="Dufourcq P."/>
            <person name="Jaspard B."/>
            <person name="Moreau C."/>
            <person name="Allieres C."/>
            <person name="Daret D."/>
            <person name="Couffinhal T."/>
            <person name="Duplaa C."/>
        </authorList>
    </citation>
    <scope>FUNCTION AS AN ANGIOGENIC FACTOR</scope>
</reference>
<reference key="7">
    <citation type="journal article" date="2009" name="Mol. Cell. Biol.">
        <title>Myocilin is a modulator of Wnt signaling.</title>
        <authorList>
            <person name="Kwon H.S."/>
            <person name="Lee H.S."/>
            <person name="Ji Y."/>
            <person name="Rubin J.S."/>
            <person name="Tomarev S.I."/>
        </authorList>
    </citation>
    <scope>INTERACTION WITH MYOC</scope>
</reference>
<reference key="8">
    <citation type="journal article" date="2016" name="Dev. Biol.">
        <title>Bmp4-Msx1 signaling and Osr2 control tooth organogenesis through antagonistic regulation of secreted Wnt antagonists.</title>
        <authorList>
            <person name="Jia S."/>
            <person name="Kwon H.E."/>
            <person name="Lan Y."/>
            <person name="Zhou J."/>
            <person name="Liu H."/>
            <person name="Jiang R."/>
        </authorList>
    </citation>
    <scope>DEVELOPMENTAL STAGE</scope>
</reference>
<proteinExistence type="evidence at protein level"/>
<dbReference type="EMBL" id="U88566">
    <property type="protein sequence ID" value="AAC53145.1"/>
    <property type="molecule type" value="mRNA"/>
</dbReference>
<dbReference type="EMBL" id="BC024495">
    <property type="protein sequence ID" value="AAH24495.1"/>
    <property type="molecule type" value="mRNA"/>
</dbReference>
<dbReference type="EMBL" id="BC094662">
    <property type="protein sequence ID" value="AAH94662.1"/>
    <property type="molecule type" value="mRNA"/>
</dbReference>
<dbReference type="EMBL" id="AK081052">
    <property type="protein sequence ID" value="BAC38123.1"/>
    <property type="molecule type" value="mRNA"/>
</dbReference>
<dbReference type="CCDS" id="CCDS22191.1"/>
<dbReference type="RefSeq" id="NP_038862.2">
    <property type="nucleotide sequence ID" value="NM_013834.3"/>
</dbReference>
<dbReference type="RefSeq" id="XP_011240430.1">
    <property type="nucleotide sequence ID" value="XM_011242128.3"/>
</dbReference>
<dbReference type="SMR" id="Q8C4U3"/>
<dbReference type="BioGRID" id="203185">
    <property type="interactions" value="10"/>
</dbReference>
<dbReference type="FunCoup" id="Q8C4U3">
    <property type="interactions" value="289"/>
</dbReference>
<dbReference type="STRING" id="10090.ENSMUSP00000033952"/>
<dbReference type="ChEMBL" id="CHEMBL1075304"/>
<dbReference type="MEROPS" id="I93.002"/>
<dbReference type="GlyCosmos" id="Q8C4U3">
    <property type="glycosylation" value="1 site, No reported glycans"/>
</dbReference>
<dbReference type="GlyGen" id="Q8C4U3">
    <property type="glycosylation" value="1 site"/>
</dbReference>
<dbReference type="iPTMnet" id="Q8C4U3"/>
<dbReference type="PhosphoSitePlus" id="Q8C4U3"/>
<dbReference type="PaxDb" id="10090-ENSMUSP00000033952"/>
<dbReference type="PeptideAtlas" id="Q8C4U3"/>
<dbReference type="ProteomicsDB" id="255399"/>
<dbReference type="Pumba" id="Q8C4U3"/>
<dbReference type="Antibodypedia" id="3767">
    <property type="antibodies" value="420 antibodies from 40 providers"/>
</dbReference>
<dbReference type="DNASU" id="20377"/>
<dbReference type="Ensembl" id="ENSMUST00000033952.8">
    <property type="protein sequence ID" value="ENSMUSP00000033952.8"/>
    <property type="gene ID" value="ENSMUSG00000031548.8"/>
</dbReference>
<dbReference type="GeneID" id="20377"/>
<dbReference type="KEGG" id="mmu:20377"/>
<dbReference type="UCSC" id="uc009lev.2">
    <property type="organism name" value="mouse"/>
</dbReference>
<dbReference type="AGR" id="MGI:892014"/>
<dbReference type="CTD" id="6422"/>
<dbReference type="MGI" id="MGI:892014">
    <property type="gene designation" value="Sfrp1"/>
</dbReference>
<dbReference type="VEuPathDB" id="HostDB:ENSMUSG00000031548"/>
<dbReference type="eggNOG" id="KOG3577">
    <property type="taxonomic scope" value="Eukaryota"/>
</dbReference>
<dbReference type="GeneTree" id="ENSGT00940000159875"/>
<dbReference type="HOGENOM" id="CLU_054647_0_0_1"/>
<dbReference type="InParanoid" id="Q8C4U3"/>
<dbReference type="OMA" id="AMLEHMC"/>
<dbReference type="OrthoDB" id="5985572at2759"/>
<dbReference type="PhylomeDB" id="Q8C4U3"/>
<dbReference type="TreeFam" id="TF350133"/>
<dbReference type="BioGRID-ORCS" id="20377">
    <property type="hits" value="1 hit in 79 CRISPR screens"/>
</dbReference>
<dbReference type="ChiTaRS" id="Sfrp1">
    <property type="organism name" value="mouse"/>
</dbReference>
<dbReference type="PRO" id="PR:Q8C4U3"/>
<dbReference type="Proteomes" id="UP000000589">
    <property type="component" value="Chromosome 8"/>
</dbReference>
<dbReference type="RNAct" id="Q8C4U3">
    <property type="molecule type" value="protein"/>
</dbReference>
<dbReference type="Bgee" id="ENSMUSG00000031548">
    <property type="expression patterns" value="Expressed in epithelium of lens and 285 other cell types or tissues"/>
</dbReference>
<dbReference type="GO" id="GO:0009986">
    <property type="term" value="C:cell surface"/>
    <property type="evidence" value="ECO:0007669"/>
    <property type="project" value="Ensembl"/>
</dbReference>
<dbReference type="GO" id="GO:0005829">
    <property type="term" value="C:cytosol"/>
    <property type="evidence" value="ECO:0007669"/>
    <property type="project" value="Ensembl"/>
</dbReference>
<dbReference type="GO" id="GO:0005615">
    <property type="term" value="C:extracellular space"/>
    <property type="evidence" value="ECO:0007005"/>
    <property type="project" value="BHF-UCL"/>
</dbReference>
<dbReference type="GO" id="GO:0005886">
    <property type="term" value="C:plasma membrane"/>
    <property type="evidence" value="ECO:0000266"/>
    <property type="project" value="MGI"/>
</dbReference>
<dbReference type="GO" id="GO:0004197">
    <property type="term" value="F:cysteine-type endopeptidase activity"/>
    <property type="evidence" value="ECO:0007669"/>
    <property type="project" value="Ensembl"/>
</dbReference>
<dbReference type="GO" id="GO:0005109">
    <property type="term" value="F:frizzled binding"/>
    <property type="evidence" value="ECO:0007669"/>
    <property type="project" value="Ensembl"/>
</dbReference>
<dbReference type="GO" id="GO:0008201">
    <property type="term" value="F:heparin binding"/>
    <property type="evidence" value="ECO:0007669"/>
    <property type="project" value="Ensembl"/>
</dbReference>
<dbReference type="GO" id="GO:0042802">
    <property type="term" value="F:identical protein binding"/>
    <property type="evidence" value="ECO:0007669"/>
    <property type="project" value="Ensembl"/>
</dbReference>
<dbReference type="GO" id="GO:0017147">
    <property type="term" value="F:Wnt-protein binding"/>
    <property type="evidence" value="ECO:0000266"/>
    <property type="project" value="MGI"/>
</dbReference>
<dbReference type="GO" id="GO:0030036">
    <property type="term" value="P:actin cytoskeleton organization"/>
    <property type="evidence" value="ECO:0000266"/>
    <property type="project" value="MGI"/>
</dbReference>
<dbReference type="GO" id="GO:0009952">
    <property type="term" value="P:anterior/posterior pattern specification"/>
    <property type="evidence" value="ECO:0000316"/>
    <property type="project" value="MGI"/>
</dbReference>
<dbReference type="GO" id="GO:0030509">
    <property type="term" value="P:BMP signaling pathway"/>
    <property type="evidence" value="ECO:0000316"/>
    <property type="project" value="MGI"/>
</dbReference>
<dbReference type="GO" id="GO:0060346">
    <property type="term" value="P:bone trabecula formation"/>
    <property type="evidence" value="ECO:0000315"/>
    <property type="project" value="MGI"/>
</dbReference>
<dbReference type="GO" id="GO:0060070">
    <property type="term" value="P:canonical Wnt signaling pathway"/>
    <property type="evidence" value="ECO:0000316"/>
    <property type="project" value="MGI"/>
</dbReference>
<dbReference type="GO" id="GO:0071392">
    <property type="term" value="P:cellular response to estradiol stimulus"/>
    <property type="evidence" value="ECO:0007669"/>
    <property type="project" value="Ensembl"/>
</dbReference>
<dbReference type="GO" id="GO:0071391">
    <property type="term" value="P:cellular response to estrogen stimulus"/>
    <property type="evidence" value="ECO:0000314"/>
    <property type="project" value="UniProtKB"/>
</dbReference>
<dbReference type="GO" id="GO:0071456">
    <property type="term" value="P:cellular response to hypoxia"/>
    <property type="evidence" value="ECO:0007669"/>
    <property type="project" value="Ensembl"/>
</dbReference>
<dbReference type="GO" id="GO:0071347">
    <property type="term" value="P:cellular response to interleukin-1"/>
    <property type="evidence" value="ECO:0007669"/>
    <property type="project" value="Ensembl"/>
</dbReference>
<dbReference type="GO" id="GO:0071380">
    <property type="term" value="P:cellular response to prostaglandin E stimulus"/>
    <property type="evidence" value="ECO:0007669"/>
    <property type="project" value="Ensembl"/>
</dbReference>
<dbReference type="GO" id="GO:0009267">
    <property type="term" value="P:cellular response to starvation"/>
    <property type="evidence" value="ECO:0007669"/>
    <property type="project" value="Ensembl"/>
</dbReference>
<dbReference type="GO" id="GO:0071560">
    <property type="term" value="P:cellular response to transforming growth factor beta stimulus"/>
    <property type="evidence" value="ECO:0007669"/>
    <property type="project" value="Ensembl"/>
</dbReference>
<dbReference type="GO" id="GO:0071356">
    <property type="term" value="P:cellular response to tumor necrosis factor"/>
    <property type="evidence" value="ECO:0007669"/>
    <property type="project" value="Ensembl"/>
</dbReference>
<dbReference type="GO" id="GO:0071305">
    <property type="term" value="P:cellular response to vitamin D"/>
    <property type="evidence" value="ECO:0007669"/>
    <property type="project" value="Ensembl"/>
</dbReference>
<dbReference type="GO" id="GO:0071481">
    <property type="term" value="P:cellular response to X-ray"/>
    <property type="evidence" value="ECO:0000314"/>
    <property type="project" value="UniProtKB"/>
</dbReference>
<dbReference type="GO" id="GO:0090246">
    <property type="term" value="P:convergent extension involved in somitogenesis"/>
    <property type="evidence" value="ECO:0000316"/>
    <property type="project" value="MGI"/>
</dbReference>
<dbReference type="GO" id="GO:0046546">
    <property type="term" value="P:development of primary male sexual characteristics"/>
    <property type="evidence" value="ECO:0000316"/>
    <property type="project" value="MGI"/>
</dbReference>
<dbReference type="GO" id="GO:0048546">
    <property type="term" value="P:digestive tract morphogenesis"/>
    <property type="evidence" value="ECO:0000316"/>
    <property type="project" value="MGI"/>
</dbReference>
<dbReference type="GO" id="GO:0071542">
    <property type="term" value="P:dopaminergic neuron differentiation"/>
    <property type="evidence" value="ECO:0000314"/>
    <property type="project" value="ParkinsonsUK-UCL"/>
</dbReference>
<dbReference type="GO" id="GO:0009950">
    <property type="term" value="P:dorsal/ventral axis specification"/>
    <property type="evidence" value="ECO:0007669"/>
    <property type="project" value="Ensembl"/>
</dbReference>
<dbReference type="GO" id="GO:0097191">
    <property type="term" value="P:extrinsic apoptotic signaling pathway"/>
    <property type="evidence" value="ECO:0000315"/>
    <property type="project" value="MGI"/>
</dbReference>
<dbReference type="GO" id="GO:0008585">
    <property type="term" value="P:female gonad development"/>
    <property type="evidence" value="ECO:0000316"/>
    <property type="project" value="MGI"/>
</dbReference>
<dbReference type="GO" id="GO:0060218">
    <property type="term" value="P:hematopoietic stem cell differentiation"/>
    <property type="evidence" value="ECO:0007669"/>
    <property type="project" value="Ensembl"/>
</dbReference>
<dbReference type="GO" id="GO:0030097">
    <property type="term" value="P:hemopoiesis"/>
    <property type="evidence" value="ECO:0000315"/>
    <property type="project" value="MGI"/>
</dbReference>
<dbReference type="GO" id="GO:0008584">
    <property type="term" value="P:male gonad development"/>
    <property type="evidence" value="ECO:0000316"/>
    <property type="project" value="MGI"/>
</dbReference>
<dbReference type="GO" id="GO:0060766">
    <property type="term" value="P:negative regulation of androgen receptor signaling pathway"/>
    <property type="evidence" value="ECO:0007669"/>
    <property type="project" value="Ensembl"/>
</dbReference>
<dbReference type="GO" id="GO:0045578">
    <property type="term" value="P:negative regulation of B cell differentiation"/>
    <property type="evidence" value="ECO:0000315"/>
    <property type="project" value="UniProtKB"/>
</dbReference>
<dbReference type="GO" id="GO:0030514">
    <property type="term" value="P:negative regulation of BMP signaling pathway"/>
    <property type="evidence" value="ECO:0000316"/>
    <property type="project" value="MGI"/>
</dbReference>
<dbReference type="GO" id="GO:0046851">
    <property type="term" value="P:negative regulation of bone remodeling"/>
    <property type="evidence" value="ECO:0007669"/>
    <property type="project" value="Ensembl"/>
</dbReference>
<dbReference type="GO" id="GO:0090090">
    <property type="term" value="P:negative regulation of canonical Wnt signaling pathway"/>
    <property type="evidence" value="ECO:0000314"/>
    <property type="project" value="UniProtKB"/>
</dbReference>
<dbReference type="GO" id="GO:0030308">
    <property type="term" value="P:negative regulation of cell growth"/>
    <property type="evidence" value="ECO:0007669"/>
    <property type="project" value="Ensembl"/>
</dbReference>
<dbReference type="GO" id="GO:0030336">
    <property type="term" value="P:negative regulation of cell migration"/>
    <property type="evidence" value="ECO:0007669"/>
    <property type="project" value="Ensembl"/>
</dbReference>
<dbReference type="GO" id="GO:0045892">
    <property type="term" value="P:negative regulation of DNA-templated transcription"/>
    <property type="evidence" value="ECO:0007669"/>
    <property type="project" value="Ensembl"/>
</dbReference>
<dbReference type="GO" id="GO:0050680">
    <property type="term" value="P:negative regulation of epithelial cell proliferation"/>
    <property type="evidence" value="ECO:0007669"/>
    <property type="project" value="Ensembl"/>
</dbReference>
<dbReference type="GO" id="GO:0010719">
    <property type="term" value="P:negative regulation of epithelial to mesenchymal transition"/>
    <property type="evidence" value="ECO:0007669"/>
    <property type="project" value="Ensembl"/>
</dbReference>
<dbReference type="GO" id="GO:2000270">
    <property type="term" value="P:negative regulation of fibroblast apoptotic process"/>
    <property type="evidence" value="ECO:0007669"/>
    <property type="project" value="Ensembl"/>
</dbReference>
<dbReference type="GO" id="GO:0048147">
    <property type="term" value="P:negative regulation of fibroblast proliferation"/>
    <property type="evidence" value="ECO:0007669"/>
    <property type="project" value="Ensembl"/>
</dbReference>
<dbReference type="GO" id="GO:0010629">
    <property type="term" value="P:negative regulation of gene expression"/>
    <property type="evidence" value="ECO:0000315"/>
    <property type="project" value="MGI"/>
</dbReference>
<dbReference type="GO" id="GO:0030279">
    <property type="term" value="P:negative regulation of ossification"/>
    <property type="evidence" value="ECO:0000315"/>
    <property type="project" value="MGI"/>
</dbReference>
<dbReference type="GO" id="GO:0045668">
    <property type="term" value="P:negative regulation of osteoblast differentiation"/>
    <property type="evidence" value="ECO:0000315"/>
    <property type="project" value="MGI"/>
</dbReference>
<dbReference type="GO" id="GO:0033689">
    <property type="term" value="P:negative regulation of osteoblast proliferation"/>
    <property type="evidence" value="ECO:0000315"/>
    <property type="project" value="MGI"/>
</dbReference>
<dbReference type="GO" id="GO:0045671">
    <property type="term" value="P:negative regulation of osteoclast differentiation"/>
    <property type="evidence" value="ECO:0000315"/>
    <property type="project" value="MGI"/>
</dbReference>
<dbReference type="GO" id="GO:0030178">
    <property type="term" value="P:negative regulation of Wnt signaling pathway"/>
    <property type="evidence" value="ECO:0000316"/>
    <property type="project" value="MGI"/>
</dbReference>
<dbReference type="GO" id="GO:0014034">
    <property type="term" value="P:neural crest cell fate commitment"/>
    <property type="evidence" value="ECO:0000315"/>
    <property type="project" value="MGI"/>
</dbReference>
<dbReference type="GO" id="GO:0001843">
    <property type="term" value="P:neural tube closure"/>
    <property type="evidence" value="ECO:0000316"/>
    <property type="project" value="MGI"/>
</dbReference>
<dbReference type="GO" id="GO:0021915">
    <property type="term" value="P:neural tube development"/>
    <property type="evidence" value="ECO:0000316"/>
    <property type="project" value="MGI"/>
</dbReference>
<dbReference type="GO" id="GO:0001649">
    <property type="term" value="P:osteoblast differentiation"/>
    <property type="evidence" value="ECO:0007669"/>
    <property type="project" value="Ensembl"/>
</dbReference>
<dbReference type="GO" id="GO:0030316">
    <property type="term" value="P:osteoclast differentiation"/>
    <property type="evidence" value="ECO:0000315"/>
    <property type="project" value="MGI"/>
</dbReference>
<dbReference type="GO" id="GO:0090263">
    <property type="term" value="P:positive regulation of canonical Wnt signaling pathway"/>
    <property type="evidence" value="ECO:0007669"/>
    <property type="project" value="Ensembl"/>
</dbReference>
<dbReference type="GO" id="GO:0030307">
    <property type="term" value="P:positive regulation of cell growth"/>
    <property type="evidence" value="ECO:0007669"/>
    <property type="project" value="Ensembl"/>
</dbReference>
<dbReference type="GO" id="GO:0008284">
    <property type="term" value="P:positive regulation of cell population proliferation"/>
    <property type="evidence" value="ECO:0007669"/>
    <property type="project" value="Ensembl"/>
</dbReference>
<dbReference type="GO" id="GO:0045893">
    <property type="term" value="P:positive regulation of DNA-templated transcription"/>
    <property type="evidence" value="ECO:0007669"/>
    <property type="project" value="Ensembl"/>
</dbReference>
<dbReference type="GO" id="GO:2001238">
    <property type="term" value="P:positive regulation of extrinsic apoptotic signaling pathway"/>
    <property type="evidence" value="ECO:0000315"/>
    <property type="project" value="MGI"/>
</dbReference>
<dbReference type="GO" id="GO:1902043">
    <property type="term" value="P:positive regulation of extrinsic apoptotic signaling pathway via death domain receptors"/>
    <property type="evidence" value="ECO:0007669"/>
    <property type="project" value="Ensembl"/>
</dbReference>
<dbReference type="GO" id="GO:0045600">
    <property type="term" value="P:positive regulation of fat cell differentiation"/>
    <property type="evidence" value="ECO:0000266"/>
    <property type="project" value="MGI"/>
</dbReference>
<dbReference type="GO" id="GO:2000271">
    <property type="term" value="P:positive regulation of fibroblast apoptotic process"/>
    <property type="evidence" value="ECO:0007669"/>
    <property type="project" value="Ensembl"/>
</dbReference>
<dbReference type="GO" id="GO:2000052">
    <property type="term" value="P:positive regulation of non-canonical Wnt signaling pathway"/>
    <property type="evidence" value="ECO:0007669"/>
    <property type="project" value="Ensembl"/>
</dbReference>
<dbReference type="GO" id="GO:0045880">
    <property type="term" value="P:positive regulation of smoothened signaling pathway"/>
    <property type="evidence" value="ECO:0007669"/>
    <property type="project" value="Ensembl"/>
</dbReference>
<dbReference type="GO" id="GO:0060527">
    <property type="term" value="P:prostate epithelial cord arborization involved in prostate glandular acinus morphogenesis"/>
    <property type="evidence" value="ECO:0000315"/>
    <property type="project" value="MGI"/>
</dbReference>
<dbReference type="GO" id="GO:0060687">
    <property type="term" value="P:regulation of branching involved in prostate gland morphogenesis"/>
    <property type="evidence" value="ECO:0000315"/>
    <property type="project" value="MGI"/>
</dbReference>
<dbReference type="GO" id="GO:0010564">
    <property type="term" value="P:regulation of cell cycle process"/>
    <property type="evidence" value="ECO:0007669"/>
    <property type="project" value="Ensembl"/>
</dbReference>
<dbReference type="GO" id="GO:0090175">
    <property type="term" value="P:regulation of establishment of planar polarity"/>
    <property type="evidence" value="ECO:0000316"/>
    <property type="project" value="MGI"/>
</dbReference>
<dbReference type="GO" id="GO:1904956">
    <property type="term" value="P:regulation of midbrain dopaminergic neuron differentiation"/>
    <property type="evidence" value="ECO:0000316"/>
    <property type="project" value="ParkinsonsUK-UCL"/>
</dbReference>
<dbReference type="GO" id="GO:0010975">
    <property type="term" value="P:regulation of neuron projection development"/>
    <property type="evidence" value="ECO:0000314"/>
    <property type="project" value="ParkinsonsUK-UCL"/>
</dbReference>
<dbReference type="GO" id="GO:0009410">
    <property type="term" value="P:response to xenobiotic stimulus"/>
    <property type="evidence" value="ECO:0000314"/>
    <property type="project" value="UniProtKB"/>
</dbReference>
<dbReference type="GO" id="GO:0035019">
    <property type="term" value="P:somatic stem cell population maintenance"/>
    <property type="evidence" value="ECO:0000315"/>
    <property type="project" value="MGI"/>
</dbReference>
<dbReference type="GO" id="GO:0001756">
    <property type="term" value="P:somitogenesis"/>
    <property type="evidence" value="ECO:0000316"/>
    <property type="project" value="MGI"/>
</dbReference>
<dbReference type="GO" id="GO:0034446">
    <property type="term" value="P:substrate adhesion-dependent cell spreading"/>
    <property type="evidence" value="ECO:0000266"/>
    <property type="project" value="MGI"/>
</dbReference>
<dbReference type="GO" id="GO:0001657">
    <property type="term" value="P:ureteric bud development"/>
    <property type="evidence" value="ECO:0000270"/>
    <property type="project" value="UniProtKB"/>
</dbReference>
<dbReference type="GO" id="GO:0090244">
    <property type="term" value="P:Wnt signaling pathway involved in somitogenesis"/>
    <property type="evidence" value="ECO:0000316"/>
    <property type="project" value="MGI"/>
</dbReference>
<dbReference type="GO" id="GO:0060071">
    <property type="term" value="P:Wnt signaling pathway, planar cell polarity pathway"/>
    <property type="evidence" value="ECO:0000314"/>
    <property type="project" value="MGI"/>
</dbReference>
<dbReference type="CDD" id="cd07443">
    <property type="entry name" value="CRD_SFRP1"/>
    <property type="match status" value="1"/>
</dbReference>
<dbReference type="CDD" id="cd03580">
    <property type="entry name" value="NTR_Sfrp1_like"/>
    <property type="match status" value="1"/>
</dbReference>
<dbReference type="FunFam" id="2.40.50.120:FF:000003">
    <property type="entry name" value="Secreted frizzled-related protein 1"/>
    <property type="match status" value="1"/>
</dbReference>
<dbReference type="FunFam" id="1.10.2000.10:FF:000001">
    <property type="entry name" value="secreted frizzled-related protein 2"/>
    <property type="match status" value="1"/>
</dbReference>
<dbReference type="Gene3D" id="2.40.50.120">
    <property type="match status" value="1"/>
</dbReference>
<dbReference type="Gene3D" id="1.10.2000.10">
    <property type="entry name" value="Frizzled cysteine-rich domain"/>
    <property type="match status" value="1"/>
</dbReference>
<dbReference type="InterPro" id="IPR015526">
    <property type="entry name" value="Frizzled/SFRP"/>
</dbReference>
<dbReference type="InterPro" id="IPR020067">
    <property type="entry name" value="Frizzled_dom"/>
</dbReference>
<dbReference type="InterPro" id="IPR036790">
    <property type="entry name" value="Frizzled_dom_sf"/>
</dbReference>
<dbReference type="InterPro" id="IPR001134">
    <property type="entry name" value="Netrin_domain"/>
</dbReference>
<dbReference type="InterPro" id="IPR018933">
    <property type="entry name" value="Netrin_module_non-TIMP"/>
</dbReference>
<dbReference type="InterPro" id="IPR041760">
    <property type="entry name" value="SFRP1_CRD"/>
</dbReference>
<dbReference type="InterPro" id="IPR008993">
    <property type="entry name" value="TIMP-like_OB-fold"/>
</dbReference>
<dbReference type="PANTHER" id="PTHR11309">
    <property type="entry name" value="FRIZZLED"/>
    <property type="match status" value="1"/>
</dbReference>
<dbReference type="PANTHER" id="PTHR11309:SF87">
    <property type="entry name" value="SECRETED FRIZZLED-RELATED PROTEIN 1"/>
    <property type="match status" value="1"/>
</dbReference>
<dbReference type="Pfam" id="PF01392">
    <property type="entry name" value="Fz"/>
    <property type="match status" value="1"/>
</dbReference>
<dbReference type="Pfam" id="PF01759">
    <property type="entry name" value="NTR"/>
    <property type="match status" value="1"/>
</dbReference>
<dbReference type="SMART" id="SM00643">
    <property type="entry name" value="C345C"/>
    <property type="match status" value="1"/>
</dbReference>
<dbReference type="SMART" id="SM00063">
    <property type="entry name" value="FRI"/>
    <property type="match status" value="1"/>
</dbReference>
<dbReference type="SUPFAM" id="SSF63501">
    <property type="entry name" value="Frizzled cysteine-rich domain"/>
    <property type="match status" value="1"/>
</dbReference>
<dbReference type="SUPFAM" id="SSF50242">
    <property type="entry name" value="TIMP-like"/>
    <property type="match status" value="1"/>
</dbReference>
<dbReference type="PROSITE" id="PS50038">
    <property type="entry name" value="FZ"/>
    <property type="match status" value="1"/>
</dbReference>
<dbReference type="PROSITE" id="PS50189">
    <property type="entry name" value="NTR"/>
    <property type="match status" value="1"/>
</dbReference>
<feature type="signal peptide" evidence="2">
    <location>
        <begin position="1"/>
        <end position="31"/>
    </location>
</feature>
<feature type="chain" id="PRO_0000032539" description="Secreted frizzled-related protein 1">
    <location>
        <begin position="32"/>
        <end position="314"/>
    </location>
</feature>
<feature type="domain" description="FZ" evidence="3">
    <location>
        <begin position="53"/>
        <end position="169"/>
    </location>
</feature>
<feature type="domain" description="NTR" evidence="4">
    <location>
        <begin position="186"/>
        <end position="306"/>
    </location>
</feature>
<feature type="glycosylation site" description="N-linked (GlcNAc...) asparagine" evidence="1">
    <location>
        <position position="173"/>
    </location>
</feature>
<feature type="disulfide bond" evidence="1">
    <location>
        <begin position="58"/>
        <end position="121"/>
    </location>
</feature>
<feature type="disulfide bond" evidence="1">
    <location>
        <begin position="68"/>
        <end position="114"/>
    </location>
</feature>
<feature type="disulfide bond" evidence="1">
    <location>
        <begin position="105"/>
        <end position="140"/>
    </location>
</feature>
<feature type="disulfide bond" evidence="1">
    <location>
        <begin position="129"/>
        <end position="166"/>
    </location>
</feature>
<feature type="disulfide bond" evidence="1">
    <location>
        <begin position="133"/>
        <end position="157"/>
    </location>
</feature>
<feature type="disulfide bond" evidence="1">
    <location>
        <begin position="186"/>
        <end position="256"/>
    </location>
</feature>
<feature type="disulfide bond" evidence="1">
    <location>
        <begin position="189"/>
        <end position="258"/>
    </location>
</feature>
<feature type="disulfide bond" evidence="1">
    <location>
        <begin position="203"/>
        <end position="306"/>
    </location>
</feature>
<feature type="sequence conflict" description="In Ref. 2; AAH24495." evidence="11" ref="2">
    <original>A</original>
    <variation>S</variation>
    <location>
        <position position="28"/>
    </location>
</feature>
<feature type="sequence conflict" description="In Ref. 1; AAC53145." evidence="11" ref="1">
    <original>R</original>
    <variation>A</variation>
    <location>
        <position position="245"/>
    </location>
</feature>
<organism>
    <name type="scientific">Mus musculus</name>
    <name type="common">Mouse</name>
    <dbReference type="NCBI Taxonomy" id="10090"/>
    <lineage>
        <taxon>Eukaryota</taxon>
        <taxon>Metazoa</taxon>
        <taxon>Chordata</taxon>
        <taxon>Craniata</taxon>
        <taxon>Vertebrata</taxon>
        <taxon>Euteleostomi</taxon>
        <taxon>Mammalia</taxon>
        <taxon>Eutheria</taxon>
        <taxon>Euarchontoglires</taxon>
        <taxon>Glires</taxon>
        <taxon>Rodentia</taxon>
        <taxon>Myomorpha</taxon>
        <taxon>Muroidea</taxon>
        <taxon>Muridae</taxon>
        <taxon>Murinae</taxon>
        <taxon>Mus</taxon>
        <taxon>Mus</taxon>
    </lineage>
</organism>
<protein>
    <recommendedName>
        <fullName evidence="12">Secreted frizzled-related protein 1</fullName>
        <shortName evidence="12">sFRP-1</shortName>
    </recommendedName>
</protein>
<accession>Q8C4U3</accession>
<accession>O08861</accession>
<accession>Q505A2</accession>
<accession>Q8R1J4</accession>
<sequence length="314" mass="35413">MGVGRSARGRGGAASGVLLALAAALLAAGSASEYDYVSFQSDIGSYQSGRFYTKPPQCVDIPVDLRLCHNVGYKKMVLPNLLEHETMAEVKQQASSWVPLLNKNCHMGTQVFLCSLFAPVCLDRPIYPCRWLCEAVRDSCEPVMQFFGFYWPEMLKCDKFPEGDVCIAMTPPNTTEASKPQGTTVCPPCDNELKSEAIIEHLCASEFALRMKIKEVKKENGDKKIVPKKKKPLKLGPIKKKELKRLVLFLKNGADCPCHQLDNLSHNFLIMGRKVKSQYLLTAIHKWDKKNKEFKNFMKRMKNHECPTFQSVFK</sequence>